<protein>
    <recommendedName>
        <fullName evidence="1">Indole-3-glycerol phosphate synthase</fullName>
        <shortName evidence="1">IGPS</shortName>
        <ecNumber evidence="1">4.1.1.48</ecNumber>
    </recommendedName>
</protein>
<evidence type="ECO:0000255" key="1">
    <source>
        <dbReference type="HAMAP-Rule" id="MF_00134"/>
    </source>
</evidence>
<gene>
    <name evidence="1" type="primary">trpC</name>
    <name type="ordered locus">MAP_1305</name>
</gene>
<accession>Q740P4</accession>
<organism>
    <name type="scientific">Mycolicibacterium paratuberculosis (strain ATCC BAA-968 / K-10)</name>
    <name type="common">Mycobacterium paratuberculosis</name>
    <dbReference type="NCBI Taxonomy" id="262316"/>
    <lineage>
        <taxon>Bacteria</taxon>
        <taxon>Bacillati</taxon>
        <taxon>Actinomycetota</taxon>
        <taxon>Actinomycetes</taxon>
        <taxon>Mycobacteriales</taxon>
        <taxon>Mycobacteriaceae</taxon>
        <taxon>Mycobacterium</taxon>
        <taxon>Mycobacterium avium complex (MAC)</taxon>
    </lineage>
</organism>
<proteinExistence type="inferred from homology"/>
<comment type="catalytic activity">
    <reaction evidence="1">
        <text>1-(2-carboxyphenylamino)-1-deoxy-D-ribulose 5-phosphate + H(+) = (1S,2R)-1-C-(indol-3-yl)glycerol 3-phosphate + CO2 + H2O</text>
        <dbReference type="Rhea" id="RHEA:23476"/>
        <dbReference type="ChEBI" id="CHEBI:15377"/>
        <dbReference type="ChEBI" id="CHEBI:15378"/>
        <dbReference type="ChEBI" id="CHEBI:16526"/>
        <dbReference type="ChEBI" id="CHEBI:58613"/>
        <dbReference type="ChEBI" id="CHEBI:58866"/>
        <dbReference type="EC" id="4.1.1.48"/>
    </reaction>
</comment>
<comment type="pathway">
    <text evidence="1">Amino-acid biosynthesis; L-tryptophan biosynthesis; L-tryptophan from chorismate: step 4/5.</text>
</comment>
<comment type="similarity">
    <text evidence="1">Belongs to the TrpC family.</text>
</comment>
<keyword id="KW-0028">Amino-acid biosynthesis</keyword>
<keyword id="KW-0057">Aromatic amino acid biosynthesis</keyword>
<keyword id="KW-0210">Decarboxylase</keyword>
<keyword id="KW-0456">Lyase</keyword>
<keyword id="KW-1185">Reference proteome</keyword>
<keyword id="KW-0822">Tryptophan biosynthesis</keyword>
<reference key="1">
    <citation type="journal article" date="2005" name="Proc. Natl. Acad. Sci. U.S.A.">
        <title>The complete genome sequence of Mycobacterium avium subspecies paratuberculosis.</title>
        <authorList>
            <person name="Li L."/>
            <person name="Bannantine J.P."/>
            <person name="Zhang Q."/>
            <person name="Amonsin A."/>
            <person name="May B.J."/>
            <person name="Alt D."/>
            <person name="Banerji N."/>
            <person name="Kanjilal S."/>
            <person name="Kapur V."/>
        </authorList>
    </citation>
    <scope>NUCLEOTIDE SEQUENCE [LARGE SCALE GENOMIC DNA]</scope>
    <source>
        <strain>ATCC BAA-968 / K-10</strain>
    </source>
</reference>
<name>TRPC_MYCPA</name>
<dbReference type="EC" id="4.1.1.48" evidence="1"/>
<dbReference type="EMBL" id="AE016958">
    <property type="protein sequence ID" value="AAS03622.1"/>
    <property type="molecule type" value="Genomic_DNA"/>
</dbReference>
<dbReference type="RefSeq" id="WP_003877736.1">
    <property type="nucleotide sequence ID" value="NZ_CP106873.1"/>
</dbReference>
<dbReference type="SMR" id="Q740P4"/>
<dbReference type="STRING" id="262316.MAP_1305"/>
<dbReference type="GeneID" id="75270578"/>
<dbReference type="KEGG" id="mpa:MAP_1305"/>
<dbReference type="eggNOG" id="COG0134">
    <property type="taxonomic scope" value="Bacteria"/>
</dbReference>
<dbReference type="HOGENOM" id="CLU_034247_0_0_11"/>
<dbReference type="UniPathway" id="UPA00035">
    <property type="reaction ID" value="UER00043"/>
</dbReference>
<dbReference type="Proteomes" id="UP000000580">
    <property type="component" value="Chromosome"/>
</dbReference>
<dbReference type="GO" id="GO:0004425">
    <property type="term" value="F:indole-3-glycerol-phosphate synthase activity"/>
    <property type="evidence" value="ECO:0007669"/>
    <property type="project" value="UniProtKB-UniRule"/>
</dbReference>
<dbReference type="GO" id="GO:0004640">
    <property type="term" value="F:phosphoribosylanthranilate isomerase activity"/>
    <property type="evidence" value="ECO:0007669"/>
    <property type="project" value="TreeGrafter"/>
</dbReference>
<dbReference type="GO" id="GO:0000162">
    <property type="term" value="P:L-tryptophan biosynthetic process"/>
    <property type="evidence" value="ECO:0007669"/>
    <property type="project" value="UniProtKB-UniRule"/>
</dbReference>
<dbReference type="CDD" id="cd00331">
    <property type="entry name" value="IGPS"/>
    <property type="match status" value="1"/>
</dbReference>
<dbReference type="FunFam" id="3.20.20.70:FF:000024">
    <property type="entry name" value="Indole-3-glycerol phosphate synthase"/>
    <property type="match status" value="1"/>
</dbReference>
<dbReference type="Gene3D" id="3.20.20.70">
    <property type="entry name" value="Aldolase class I"/>
    <property type="match status" value="1"/>
</dbReference>
<dbReference type="HAMAP" id="MF_00134_A">
    <property type="entry name" value="IGPS_A"/>
    <property type="match status" value="1"/>
</dbReference>
<dbReference type="HAMAP" id="MF_00134_B">
    <property type="entry name" value="IGPS_B"/>
    <property type="match status" value="1"/>
</dbReference>
<dbReference type="InterPro" id="IPR013785">
    <property type="entry name" value="Aldolase_TIM"/>
</dbReference>
<dbReference type="InterPro" id="IPR045186">
    <property type="entry name" value="Indole-3-glycerol_P_synth"/>
</dbReference>
<dbReference type="InterPro" id="IPR013798">
    <property type="entry name" value="Indole-3-glycerol_P_synth_dom"/>
</dbReference>
<dbReference type="InterPro" id="IPR001468">
    <property type="entry name" value="Indole-3-GlycerolPSynthase_CS"/>
</dbReference>
<dbReference type="InterPro" id="IPR011060">
    <property type="entry name" value="RibuloseP-bd_barrel"/>
</dbReference>
<dbReference type="NCBIfam" id="NF001369">
    <property type="entry name" value="PRK00278.1-1"/>
    <property type="match status" value="1"/>
</dbReference>
<dbReference type="NCBIfam" id="NF001377">
    <property type="entry name" value="PRK00278.2-4"/>
    <property type="match status" value="1"/>
</dbReference>
<dbReference type="PANTHER" id="PTHR22854:SF2">
    <property type="entry name" value="INDOLE-3-GLYCEROL-PHOSPHATE SYNTHASE"/>
    <property type="match status" value="1"/>
</dbReference>
<dbReference type="PANTHER" id="PTHR22854">
    <property type="entry name" value="TRYPTOPHAN BIOSYNTHESIS PROTEIN"/>
    <property type="match status" value="1"/>
</dbReference>
<dbReference type="Pfam" id="PF00218">
    <property type="entry name" value="IGPS"/>
    <property type="match status" value="1"/>
</dbReference>
<dbReference type="SUPFAM" id="SSF51366">
    <property type="entry name" value="Ribulose-phoshate binding barrel"/>
    <property type="match status" value="1"/>
</dbReference>
<dbReference type="PROSITE" id="PS00614">
    <property type="entry name" value="IGPS"/>
    <property type="match status" value="1"/>
</dbReference>
<sequence length="272" mass="28125">MSPATVLDSILEGVRADVAAREALISLSEIKAAAAAAPPPLDVMAALREPGIGVIAEVKRASPSAGSLATIADPAKLARAYEDGGARIISVLTEERRFHGSLDDLDAVRAAVSIPVLRKDFVVQPYQIHEARAHGADMLLLIVAALEQSALVSMLDRTESLGMTALVEVHTEEEADRALRAGAKVIGVNARDLATLEVDRDCFARIAPGLPSNVIRIAESGVRGTGDLLAYAGAGADAVLVGEGLVKSGDPRAAVADLVTAGTHPSCPKPAR</sequence>
<feature type="chain" id="PRO_1000018500" description="Indole-3-glycerol phosphate synthase">
    <location>
        <begin position="1"/>
        <end position="272"/>
    </location>
</feature>